<proteinExistence type="inferred from homology"/>
<accession>C3KVP4</accession>
<evidence type="ECO:0000255" key="1">
    <source>
        <dbReference type="HAMAP-Rule" id="MF_01342"/>
    </source>
</evidence>
<evidence type="ECO:0000305" key="2"/>
<organism>
    <name type="scientific">Clostridium botulinum (strain 657 / Type Ba4)</name>
    <dbReference type="NCBI Taxonomy" id="515621"/>
    <lineage>
        <taxon>Bacteria</taxon>
        <taxon>Bacillati</taxon>
        <taxon>Bacillota</taxon>
        <taxon>Clostridia</taxon>
        <taxon>Eubacteriales</taxon>
        <taxon>Clostridiaceae</taxon>
        <taxon>Clostridium</taxon>
    </lineage>
</organism>
<dbReference type="EMBL" id="CP001083">
    <property type="protein sequence ID" value="ACQ54997.1"/>
    <property type="molecule type" value="Genomic_DNA"/>
</dbReference>
<dbReference type="RefSeq" id="WP_003357619.1">
    <property type="nucleotide sequence ID" value="NC_012658.1"/>
</dbReference>
<dbReference type="SMR" id="C3KVP4"/>
<dbReference type="GeneID" id="92940243"/>
<dbReference type="KEGG" id="cbi:CLJ_B3782"/>
<dbReference type="HOGENOM" id="CLU_078858_2_1_9"/>
<dbReference type="Proteomes" id="UP000002333">
    <property type="component" value="Chromosome"/>
</dbReference>
<dbReference type="GO" id="GO:0022625">
    <property type="term" value="C:cytosolic large ribosomal subunit"/>
    <property type="evidence" value="ECO:0007669"/>
    <property type="project" value="TreeGrafter"/>
</dbReference>
<dbReference type="GO" id="GO:0019843">
    <property type="term" value="F:rRNA binding"/>
    <property type="evidence" value="ECO:0007669"/>
    <property type="project" value="UniProtKB-UniRule"/>
</dbReference>
<dbReference type="GO" id="GO:0003735">
    <property type="term" value="F:structural constituent of ribosome"/>
    <property type="evidence" value="ECO:0007669"/>
    <property type="project" value="InterPro"/>
</dbReference>
<dbReference type="GO" id="GO:0000049">
    <property type="term" value="F:tRNA binding"/>
    <property type="evidence" value="ECO:0007669"/>
    <property type="project" value="UniProtKB-KW"/>
</dbReference>
<dbReference type="GO" id="GO:0006412">
    <property type="term" value="P:translation"/>
    <property type="evidence" value="ECO:0007669"/>
    <property type="project" value="UniProtKB-UniRule"/>
</dbReference>
<dbReference type="CDD" id="cd01433">
    <property type="entry name" value="Ribosomal_L16_L10e"/>
    <property type="match status" value="1"/>
</dbReference>
<dbReference type="FunFam" id="3.90.1170.10:FF:000001">
    <property type="entry name" value="50S ribosomal protein L16"/>
    <property type="match status" value="1"/>
</dbReference>
<dbReference type="Gene3D" id="3.90.1170.10">
    <property type="entry name" value="Ribosomal protein L10e/L16"/>
    <property type="match status" value="1"/>
</dbReference>
<dbReference type="HAMAP" id="MF_01342">
    <property type="entry name" value="Ribosomal_uL16"/>
    <property type="match status" value="1"/>
</dbReference>
<dbReference type="InterPro" id="IPR047873">
    <property type="entry name" value="Ribosomal_uL16"/>
</dbReference>
<dbReference type="InterPro" id="IPR000114">
    <property type="entry name" value="Ribosomal_uL16_bact-type"/>
</dbReference>
<dbReference type="InterPro" id="IPR020798">
    <property type="entry name" value="Ribosomal_uL16_CS"/>
</dbReference>
<dbReference type="InterPro" id="IPR016180">
    <property type="entry name" value="Ribosomal_uL16_dom"/>
</dbReference>
<dbReference type="InterPro" id="IPR036920">
    <property type="entry name" value="Ribosomal_uL16_sf"/>
</dbReference>
<dbReference type="NCBIfam" id="TIGR01164">
    <property type="entry name" value="rplP_bact"/>
    <property type="match status" value="1"/>
</dbReference>
<dbReference type="PANTHER" id="PTHR12220">
    <property type="entry name" value="50S/60S RIBOSOMAL PROTEIN L16"/>
    <property type="match status" value="1"/>
</dbReference>
<dbReference type="PANTHER" id="PTHR12220:SF13">
    <property type="entry name" value="LARGE RIBOSOMAL SUBUNIT PROTEIN UL16M"/>
    <property type="match status" value="1"/>
</dbReference>
<dbReference type="Pfam" id="PF00252">
    <property type="entry name" value="Ribosomal_L16"/>
    <property type="match status" value="1"/>
</dbReference>
<dbReference type="PRINTS" id="PR00060">
    <property type="entry name" value="RIBOSOMALL16"/>
</dbReference>
<dbReference type="SUPFAM" id="SSF54686">
    <property type="entry name" value="Ribosomal protein L16p/L10e"/>
    <property type="match status" value="1"/>
</dbReference>
<dbReference type="PROSITE" id="PS00586">
    <property type="entry name" value="RIBOSOMAL_L16_1"/>
    <property type="match status" value="1"/>
</dbReference>
<dbReference type="PROSITE" id="PS00701">
    <property type="entry name" value="RIBOSOMAL_L16_2"/>
    <property type="match status" value="1"/>
</dbReference>
<reference key="1">
    <citation type="submission" date="2008-05" db="EMBL/GenBank/DDBJ databases">
        <title>Genome sequence of Clostridium botulinum Ba4 strain 657.</title>
        <authorList>
            <person name="Shrivastava S."/>
            <person name="Brown J.L."/>
            <person name="Bruce D."/>
            <person name="Detter C."/>
            <person name="Munk C."/>
            <person name="Smith L.A."/>
            <person name="Smith T.J."/>
            <person name="Sutton G."/>
            <person name="Brettin T.S."/>
        </authorList>
    </citation>
    <scope>NUCLEOTIDE SEQUENCE [LARGE SCALE GENOMIC DNA]</scope>
    <source>
        <strain>657 / Type Ba4</strain>
    </source>
</reference>
<sequence length="147" mass="16542">MLMPKRVKRRKVQRGRMKGKATRGNFIAYGDFGIQATECGWITSNQIEAARIAINRYVKRGGKVWIKIFPDKPVTEKPAETRMGSGKGSPEYWVAVVKPGRVLFEISGVSETVAREAMRLASHKLPVKTKFVTRRDFEEMGGEVNEG</sequence>
<feature type="chain" id="PRO_1000214723" description="Large ribosomal subunit protein uL16">
    <location>
        <begin position="1"/>
        <end position="147"/>
    </location>
</feature>
<gene>
    <name evidence="1" type="primary">rplP</name>
    <name type="ordered locus">CLJ_B3782</name>
</gene>
<comment type="function">
    <text evidence="1">Binds 23S rRNA and is also seen to make contacts with the A and possibly P site tRNAs.</text>
</comment>
<comment type="subunit">
    <text evidence="1">Part of the 50S ribosomal subunit.</text>
</comment>
<comment type="similarity">
    <text evidence="1">Belongs to the universal ribosomal protein uL16 family.</text>
</comment>
<keyword id="KW-0687">Ribonucleoprotein</keyword>
<keyword id="KW-0689">Ribosomal protein</keyword>
<keyword id="KW-0694">RNA-binding</keyword>
<keyword id="KW-0699">rRNA-binding</keyword>
<keyword id="KW-0820">tRNA-binding</keyword>
<protein>
    <recommendedName>
        <fullName evidence="1">Large ribosomal subunit protein uL16</fullName>
    </recommendedName>
    <alternativeName>
        <fullName evidence="2">50S ribosomal protein L16</fullName>
    </alternativeName>
</protein>
<name>RL16_CLOB6</name>